<evidence type="ECO:0000255" key="1">
    <source>
        <dbReference type="HAMAP-Rule" id="MF_02002"/>
    </source>
</evidence>
<protein>
    <recommendedName>
        <fullName evidence="1">Isoleucine--tRNA ligase</fullName>
        <ecNumber evidence="1">6.1.1.5</ecNumber>
    </recommendedName>
    <alternativeName>
        <fullName evidence="1">Isoleucyl-tRNA synthetase</fullName>
        <shortName evidence="1">IleRS</shortName>
    </alternativeName>
</protein>
<organism>
    <name type="scientific">Marinomonas sp. (strain MWYL1)</name>
    <dbReference type="NCBI Taxonomy" id="400668"/>
    <lineage>
        <taxon>Bacteria</taxon>
        <taxon>Pseudomonadati</taxon>
        <taxon>Pseudomonadota</taxon>
        <taxon>Gammaproteobacteria</taxon>
        <taxon>Oceanospirillales</taxon>
        <taxon>Oceanospirillaceae</taxon>
        <taxon>Marinomonas</taxon>
    </lineage>
</organism>
<accession>A6W346</accession>
<sequence>MSDYKPTLNLPDTDFPMRGDLAKREPAMLKRWQDMDLYQKVRDVTKGRKSFILHDGPPYANGSIHIGHAVNKILKDIIVKSKTVSGFDAPYIPGWDCHGLPIEHKVEQLIGKAGTKVSYKEFRAKCREYAYTQIEEQKKDFIRLGVMGDWENPYLTMNFQTEANIVRALGKIAENGHLVKGFKPVYWSVVGGSALAEAEVEYQDKTSLSLDVRYAPQDEAALLAKFSAVEGEGKVSVVIWTTTPWTLPASQAVSIHPEFNYALVEVDMGLGKERLILAEDMVASVMSRYGVTDFRIVGRTVGAELAGTVLNHPFLQRDIPVILGEHVTTEAGTGCVHTAPDHGVDDFNVGRENGIGTINLVQDNGVYSDAAGEFAGLHVYKVDDAVLEALNRNNALVFESKIFHSYPHCWRTKTPLIFRATPQWFISMTKEGLLDSAKHAVEGVKWVPSWGQNRMEGMLNNSPDWCVSRQRTWGVPIALFINKETQELHPETPRLIEEVAKRIEVEGIDAWFEMEAEELLGADAEKYSKVTDTLDVWFDSGVTHYSVIDQRDELSFPADLYLEGSDQHRGWFQSSLKTSIAIRGVPPYKQVLTHGFTVDGDGRKMSKSLGNVLSPQKVMDTLGADIIRLWVAATDYTTEMTVSDEILKRVADSYRRIRNTARFMMANLNGFNPATDMVPAKDMIALDRWIVDRAALLQKELNTAYNEYQFHTVNQKIQNFCSVDLGGFYLDVIKDRQYTTQKDSLARRSAQTALYHVIEAFSRWIAPILSFTADEIWQTLPGERGESVFLETWYEGLEELTGDEAMGREFWKQVLEAKVATNKVLEAARSEGKMKASLSADITLYCDDALQTTLNRLGEELRFVLIASDVKVLPLSQAGEDAVATDLDGLKVHVELSKYTKCVRCWHHREEVGKRDAHPELCDRCISNLPDGEGEQRLYA</sequence>
<comment type="function">
    <text evidence="1">Catalyzes the attachment of isoleucine to tRNA(Ile). As IleRS can inadvertently accommodate and process structurally similar amino acids such as valine, to avoid such errors it has two additional distinct tRNA(Ile)-dependent editing activities. One activity is designated as 'pretransfer' editing and involves the hydrolysis of activated Val-AMP. The other activity is designated 'posttransfer' editing and involves deacylation of mischarged Val-tRNA(Ile).</text>
</comment>
<comment type="catalytic activity">
    <reaction evidence="1">
        <text>tRNA(Ile) + L-isoleucine + ATP = L-isoleucyl-tRNA(Ile) + AMP + diphosphate</text>
        <dbReference type="Rhea" id="RHEA:11060"/>
        <dbReference type="Rhea" id="RHEA-COMP:9666"/>
        <dbReference type="Rhea" id="RHEA-COMP:9695"/>
        <dbReference type="ChEBI" id="CHEBI:30616"/>
        <dbReference type="ChEBI" id="CHEBI:33019"/>
        <dbReference type="ChEBI" id="CHEBI:58045"/>
        <dbReference type="ChEBI" id="CHEBI:78442"/>
        <dbReference type="ChEBI" id="CHEBI:78528"/>
        <dbReference type="ChEBI" id="CHEBI:456215"/>
        <dbReference type="EC" id="6.1.1.5"/>
    </reaction>
</comment>
<comment type="cofactor">
    <cofactor evidence="1">
        <name>Zn(2+)</name>
        <dbReference type="ChEBI" id="CHEBI:29105"/>
    </cofactor>
    <text evidence="1">Binds 1 zinc ion per subunit.</text>
</comment>
<comment type="subunit">
    <text evidence="1">Monomer.</text>
</comment>
<comment type="subcellular location">
    <subcellularLocation>
        <location evidence="1">Cytoplasm</location>
    </subcellularLocation>
</comment>
<comment type="domain">
    <text evidence="1">IleRS has two distinct active sites: one for aminoacylation and one for editing. The misactivated valine is translocated from the active site to the editing site, which sterically excludes the correctly activated isoleucine. The single editing site contains two valyl binding pockets, one specific for each substrate (Val-AMP or Val-tRNA(Ile)).</text>
</comment>
<comment type="similarity">
    <text evidence="1">Belongs to the class-I aminoacyl-tRNA synthetase family. IleS type 1 subfamily.</text>
</comment>
<reference key="1">
    <citation type="submission" date="2007-06" db="EMBL/GenBank/DDBJ databases">
        <title>Complete sequence of Marinomonas sp. MWYL1.</title>
        <authorList>
            <consortium name="US DOE Joint Genome Institute"/>
            <person name="Copeland A."/>
            <person name="Lucas S."/>
            <person name="Lapidus A."/>
            <person name="Barry K."/>
            <person name="Glavina del Rio T."/>
            <person name="Dalin E."/>
            <person name="Tice H."/>
            <person name="Pitluck S."/>
            <person name="Kiss H."/>
            <person name="Brettin T."/>
            <person name="Bruce D."/>
            <person name="Detter J.C."/>
            <person name="Han C."/>
            <person name="Schmutz J."/>
            <person name="Larimer F."/>
            <person name="Land M."/>
            <person name="Hauser L."/>
            <person name="Kyrpides N."/>
            <person name="Kim E."/>
            <person name="Johnston A.W.B."/>
            <person name="Todd J.D."/>
            <person name="Rogers R."/>
            <person name="Wexler M."/>
            <person name="Bond P.L."/>
            <person name="Li Y."/>
            <person name="Richardson P."/>
        </authorList>
    </citation>
    <scope>NUCLEOTIDE SEQUENCE [LARGE SCALE GENOMIC DNA]</scope>
    <source>
        <strain>MWYL1</strain>
    </source>
</reference>
<name>SYI_MARMS</name>
<dbReference type="EC" id="6.1.1.5" evidence="1"/>
<dbReference type="EMBL" id="CP000749">
    <property type="protein sequence ID" value="ABR73125.1"/>
    <property type="molecule type" value="Genomic_DNA"/>
</dbReference>
<dbReference type="SMR" id="A6W346"/>
<dbReference type="STRING" id="400668.Mmwyl1_4230"/>
<dbReference type="KEGG" id="mmw:Mmwyl1_4230"/>
<dbReference type="eggNOG" id="COG0060">
    <property type="taxonomic scope" value="Bacteria"/>
</dbReference>
<dbReference type="HOGENOM" id="CLU_001493_7_0_6"/>
<dbReference type="OrthoDB" id="9810365at2"/>
<dbReference type="GO" id="GO:0005829">
    <property type="term" value="C:cytosol"/>
    <property type="evidence" value="ECO:0007669"/>
    <property type="project" value="TreeGrafter"/>
</dbReference>
<dbReference type="GO" id="GO:0002161">
    <property type="term" value="F:aminoacyl-tRNA deacylase activity"/>
    <property type="evidence" value="ECO:0007669"/>
    <property type="project" value="InterPro"/>
</dbReference>
<dbReference type="GO" id="GO:0005524">
    <property type="term" value="F:ATP binding"/>
    <property type="evidence" value="ECO:0007669"/>
    <property type="project" value="UniProtKB-UniRule"/>
</dbReference>
<dbReference type="GO" id="GO:0004822">
    <property type="term" value="F:isoleucine-tRNA ligase activity"/>
    <property type="evidence" value="ECO:0007669"/>
    <property type="project" value="UniProtKB-UniRule"/>
</dbReference>
<dbReference type="GO" id="GO:0000049">
    <property type="term" value="F:tRNA binding"/>
    <property type="evidence" value="ECO:0007669"/>
    <property type="project" value="InterPro"/>
</dbReference>
<dbReference type="GO" id="GO:0008270">
    <property type="term" value="F:zinc ion binding"/>
    <property type="evidence" value="ECO:0007669"/>
    <property type="project" value="UniProtKB-UniRule"/>
</dbReference>
<dbReference type="GO" id="GO:0006428">
    <property type="term" value="P:isoleucyl-tRNA aminoacylation"/>
    <property type="evidence" value="ECO:0007669"/>
    <property type="project" value="UniProtKB-UniRule"/>
</dbReference>
<dbReference type="CDD" id="cd07960">
    <property type="entry name" value="Anticodon_Ia_Ile_BEm"/>
    <property type="match status" value="1"/>
</dbReference>
<dbReference type="FunFam" id="1.10.730.20:FF:000001">
    <property type="entry name" value="Isoleucine--tRNA ligase"/>
    <property type="match status" value="1"/>
</dbReference>
<dbReference type="FunFam" id="3.40.50.620:FF:000042">
    <property type="entry name" value="Isoleucine--tRNA ligase"/>
    <property type="match status" value="1"/>
</dbReference>
<dbReference type="FunFam" id="3.40.50.620:FF:000048">
    <property type="entry name" value="Isoleucine--tRNA ligase"/>
    <property type="match status" value="1"/>
</dbReference>
<dbReference type="Gene3D" id="1.10.730.20">
    <property type="match status" value="1"/>
</dbReference>
<dbReference type="Gene3D" id="3.40.50.620">
    <property type="entry name" value="HUPs"/>
    <property type="match status" value="2"/>
</dbReference>
<dbReference type="Gene3D" id="3.90.740.10">
    <property type="entry name" value="Valyl/Leucyl/Isoleucyl-tRNA synthetase, editing domain"/>
    <property type="match status" value="1"/>
</dbReference>
<dbReference type="HAMAP" id="MF_02002">
    <property type="entry name" value="Ile_tRNA_synth_type1"/>
    <property type="match status" value="1"/>
</dbReference>
<dbReference type="InterPro" id="IPR001412">
    <property type="entry name" value="aa-tRNA-synth_I_CS"/>
</dbReference>
<dbReference type="InterPro" id="IPR002300">
    <property type="entry name" value="aa-tRNA-synth_Ia"/>
</dbReference>
<dbReference type="InterPro" id="IPR033708">
    <property type="entry name" value="Anticodon_Ile_BEm"/>
</dbReference>
<dbReference type="InterPro" id="IPR002301">
    <property type="entry name" value="Ile-tRNA-ligase"/>
</dbReference>
<dbReference type="InterPro" id="IPR023585">
    <property type="entry name" value="Ile-tRNA-ligase_type1"/>
</dbReference>
<dbReference type="InterPro" id="IPR050081">
    <property type="entry name" value="Ile-tRNA_ligase"/>
</dbReference>
<dbReference type="InterPro" id="IPR013155">
    <property type="entry name" value="M/V/L/I-tRNA-synth_anticd-bd"/>
</dbReference>
<dbReference type="InterPro" id="IPR014729">
    <property type="entry name" value="Rossmann-like_a/b/a_fold"/>
</dbReference>
<dbReference type="InterPro" id="IPR009080">
    <property type="entry name" value="tRNAsynth_Ia_anticodon-bd"/>
</dbReference>
<dbReference type="InterPro" id="IPR009008">
    <property type="entry name" value="Val/Leu/Ile-tRNA-synth_edit"/>
</dbReference>
<dbReference type="InterPro" id="IPR010663">
    <property type="entry name" value="Znf_FPG/IleRS"/>
</dbReference>
<dbReference type="NCBIfam" id="TIGR00392">
    <property type="entry name" value="ileS"/>
    <property type="match status" value="1"/>
</dbReference>
<dbReference type="PANTHER" id="PTHR42765:SF1">
    <property type="entry name" value="ISOLEUCINE--TRNA LIGASE, MITOCHONDRIAL"/>
    <property type="match status" value="1"/>
</dbReference>
<dbReference type="PANTHER" id="PTHR42765">
    <property type="entry name" value="SOLEUCYL-TRNA SYNTHETASE"/>
    <property type="match status" value="1"/>
</dbReference>
<dbReference type="Pfam" id="PF08264">
    <property type="entry name" value="Anticodon_1"/>
    <property type="match status" value="1"/>
</dbReference>
<dbReference type="Pfam" id="PF00133">
    <property type="entry name" value="tRNA-synt_1"/>
    <property type="match status" value="1"/>
</dbReference>
<dbReference type="Pfam" id="PF06827">
    <property type="entry name" value="zf-FPG_IleRS"/>
    <property type="match status" value="1"/>
</dbReference>
<dbReference type="PRINTS" id="PR00984">
    <property type="entry name" value="TRNASYNTHILE"/>
</dbReference>
<dbReference type="SUPFAM" id="SSF47323">
    <property type="entry name" value="Anticodon-binding domain of a subclass of class I aminoacyl-tRNA synthetases"/>
    <property type="match status" value="1"/>
</dbReference>
<dbReference type="SUPFAM" id="SSF52374">
    <property type="entry name" value="Nucleotidylyl transferase"/>
    <property type="match status" value="1"/>
</dbReference>
<dbReference type="SUPFAM" id="SSF50677">
    <property type="entry name" value="ValRS/IleRS/LeuRS editing domain"/>
    <property type="match status" value="1"/>
</dbReference>
<dbReference type="PROSITE" id="PS00178">
    <property type="entry name" value="AA_TRNA_LIGASE_I"/>
    <property type="match status" value="1"/>
</dbReference>
<proteinExistence type="inferred from homology"/>
<gene>
    <name evidence="1" type="primary">ileS</name>
    <name type="ordered locus">Mmwyl1_4230</name>
</gene>
<feature type="chain" id="PRO_1000088548" description="Isoleucine--tRNA ligase">
    <location>
        <begin position="1"/>
        <end position="940"/>
    </location>
</feature>
<feature type="short sequence motif" description="'HIGH' region">
    <location>
        <begin position="58"/>
        <end position="68"/>
    </location>
</feature>
<feature type="short sequence motif" description="'KMSKS' region">
    <location>
        <begin position="604"/>
        <end position="608"/>
    </location>
</feature>
<feature type="binding site" evidence="1">
    <location>
        <position position="563"/>
    </location>
    <ligand>
        <name>L-isoleucyl-5'-AMP</name>
        <dbReference type="ChEBI" id="CHEBI:178002"/>
    </ligand>
</feature>
<feature type="binding site" evidence="1">
    <location>
        <position position="607"/>
    </location>
    <ligand>
        <name>ATP</name>
        <dbReference type="ChEBI" id="CHEBI:30616"/>
    </ligand>
</feature>
<feature type="binding site" evidence="1">
    <location>
        <position position="902"/>
    </location>
    <ligand>
        <name>Zn(2+)</name>
        <dbReference type="ChEBI" id="CHEBI:29105"/>
    </ligand>
</feature>
<feature type="binding site" evidence="1">
    <location>
        <position position="905"/>
    </location>
    <ligand>
        <name>Zn(2+)</name>
        <dbReference type="ChEBI" id="CHEBI:29105"/>
    </ligand>
</feature>
<feature type="binding site" evidence="1">
    <location>
        <position position="922"/>
    </location>
    <ligand>
        <name>Zn(2+)</name>
        <dbReference type="ChEBI" id="CHEBI:29105"/>
    </ligand>
</feature>
<feature type="binding site" evidence="1">
    <location>
        <position position="925"/>
    </location>
    <ligand>
        <name>Zn(2+)</name>
        <dbReference type="ChEBI" id="CHEBI:29105"/>
    </ligand>
</feature>
<keyword id="KW-0030">Aminoacyl-tRNA synthetase</keyword>
<keyword id="KW-0067">ATP-binding</keyword>
<keyword id="KW-0963">Cytoplasm</keyword>
<keyword id="KW-0436">Ligase</keyword>
<keyword id="KW-0479">Metal-binding</keyword>
<keyword id="KW-0547">Nucleotide-binding</keyword>
<keyword id="KW-0648">Protein biosynthesis</keyword>
<keyword id="KW-0862">Zinc</keyword>